<comment type="function">
    <text evidence="1">Catalyzes the hydrolysis of UDP-3-O-myristoyl-N-acetylglucosamine to form UDP-3-O-myristoylglucosamine and acetate, the committed step in lipid A biosynthesis.</text>
</comment>
<comment type="catalytic activity">
    <reaction evidence="1">
        <text>a UDP-3-O-[(3R)-3-hydroxyacyl]-N-acetyl-alpha-D-glucosamine + H2O = a UDP-3-O-[(3R)-3-hydroxyacyl]-alpha-D-glucosamine + acetate</text>
        <dbReference type="Rhea" id="RHEA:67816"/>
        <dbReference type="ChEBI" id="CHEBI:15377"/>
        <dbReference type="ChEBI" id="CHEBI:30089"/>
        <dbReference type="ChEBI" id="CHEBI:137740"/>
        <dbReference type="ChEBI" id="CHEBI:173225"/>
        <dbReference type="EC" id="3.5.1.108"/>
    </reaction>
</comment>
<comment type="cofactor">
    <cofactor evidence="1">
        <name>Zn(2+)</name>
        <dbReference type="ChEBI" id="CHEBI:29105"/>
    </cofactor>
</comment>
<comment type="pathway">
    <text evidence="1">Glycolipid biosynthesis; lipid IV(A) biosynthesis; lipid IV(A) from (3R)-3-hydroxytetradecanoyl-[acyl-carrier-protein] and UDP-N-acetyl-alpha-D-glucosamine: step 2/6.</text>
</comment>
<comment type="similarity">
    <text evidence="1">Belongs to the LpxC family.</text>
</comment>
<accession>C3LQU1</accession>
<gene>
    <name evidence="1" type="primary">lpxC</name>
    <name type="ordered locus">VCM66_2319</name>
</gene>
<evidence type="ECO:0000255" key="1">
    <source>
        <dbReference type="HAMAP-Rule" id="MF_00388"/>
    </source>
</evidence>
<protein>
    <recommendedName>
        <fullName evidence="1">UDP-3-O-acyl-N-acetylglucosamine deacetylase</fullName>
        <shortName evidence="1">UDP-3-O-acyl-GlcNAc deacetylase</shortName>
        <ecNumber evidence="1">3.5.1.108</ecNumber>
    </recommendedName>
    <alternativeName>
        <fullName evidence="1">UDP-3-O-[R-3-hydroxymyristoyl]-N-acetylglucosamine deacetylase</fullName>
    </alternativeName>
</protein>
<organism>
    <name type="scientific">Vibrio cholerae serotype O1 (strain M66-2)</name>
    <dbReference type="NCBI Taxonomy" id="579112"/>
    <lineage>
        <taxon>Bacteria</taxon>
        <taxon>Pseudomonadati</taxon>
        <taxon>Pseudomonadota</taxon>
        <taxon>Gammaproteobacteria</taxon>
        <taxon>Vibrionales</taxon>
        <taxon>Vibrionaceae</taxon>
        <taxon>Vibrio</taxon>
    </lineage>
</organism>
<proteinExistence type="inferred from homology"/>
<dbReference type="EC" id="3.5.1.108" evidence="1"/>
<dbReference type="EMBL" id="CP001233">
    <property type="protein sequence ID" value="ACP06619.1"/>
    <property type="molecule type" value="Genomic_DNA"/>
</dbReference>
<dbReference type="RefSeq" id="WP_000621097.1">
    <property type="nucleotide sequence ID" value="NC_012578.1"/>
</dbReference>
<dbReference type="SMR" id="C3LQU1"/>
<dbReference type="GeneID" id="88783207"/>
<dbReference type="KEGG" id="vcm:VCM66_2319"/>
<dbReference type="HOGENOM" id="CLU_046528_1_0_6"/>
<dbReference type="UniPathway" id="UPA00359">
    <property type="reaction ID" value="UER00478"/>
</dbReference>
<dbReference type="Proteomes" id="UP000001217">
    <property type="component" value="Chromosome I"/>
</dbReference>
<dbReference type="GO" id="GO:0016020">
    <property type="term" value="C:membrane"/>
    <property type="evidence" value="ECO:0007669"/>
    <property type="project" value="GOC"/>
</dbReference>
<dbReference type="GO" id="GO:0046872">
    <property type="term" value="F:metal ion binding"/>
    <property type="evidence" value="ECO:0007669"/>
    <property type="project" value="UniProtKB-KW"/>
</dbReference>
<dbReference type="GO" id="GO:0103117">
    <property type="term" value="F:UDP-3-O-acyl-N-acetylglucosamine deacetylase activity"/>
    <property type="evidence" value="ECO:0007669"/>
    <property type="project" value="UniProtKB-UniRule"/>
</dbReference>
<dbReference type="GO" id="GO:0009245">
    <property type="term" value="P:lipid A biosynthetic process"/>
    <property type="evidence" value="ECO:0007669"/>
    <property type="project" value="UniProtKB-UniRule"/>
</dbReference>
<dbReference type="FunFam" id="3.30.1700.10:FF:000001">
    <property type="entry name" value="UDP-3-O-acyl-N-acetylglucosamine deacetylase"/>
    <property type="match status" value="1"/>
</dbReference>
<dbReference type="FunFam" id="3.30.230.20:FF:000001">
    <property type="entry name" value="UDP-3-O-acyl-N-acetylglucosamine deacetylase"/>
    <property type="match status" value="1"/>
</dbReference>
<dbReference type="Gene3D" id="3.30.230.20">
    <property type="entry name" value="lpxc deacetylase, domain 1"/>
    <property type="match status" value="1"/>
</dbReference>
<dbReference type="Gene3D" id="3.30.1700.10">
    <property type="entry name" value="lpxc deacetylase, domain 2"/>
    <property type="match status" value="1"/>
</dbReference>
<dbReference type="HAMAP" id="MF_00388">
    <property type="entry name" value="LpxC"/>
    <property type="match status" value="1"/>
</dbReference>
<dbReference type="InterPro" id="IPR020568">
    <property type="entry name" value="Ribosomal_Su5_D2-typ_SF"/>
</dbReference>
<dbReference type="InterPro" id="IPR004463">
    <property type="entry name" value="UDP-acyl_GlcNac_deAcase"/>
</dbReference>
<dbReference type="InterPro" id="IPR011334">
    <property type="entry name" value="UDP-acyl_GlcNac_deAcase_C"/>
</dbReference>
<dbReference type="InterPro" id="IPR015870">
    <property type="entry name" value="UDP-acyl_N-AcGlcN_deAcase_N"/>
</dbReference>
<dbReference type="NCBIfam" id="TIGR00325">
    <property type="entry name" value="lpxC"/>
    <property type="match status" value="1"/>
</dbReference>
<dbReference type="PANTHER" id="PTHR33694">
    <property type="entry name" value="UDP-3-O-ACYL-N-ACETYLGLUCOSAMINE DEACETYLASE 1, MITOCHONDRIAL-RELATED"/>
    <property type="match status" value="1"/>
</dbReference>
<dbReference type="PANTHER" id="PTHR33694:SF1">
    <property type="entry name" value="UDP-3-O-ACYL-N-ACETYLGLUCOSAMINE DEACETYLASE 1, MITOCHONDRIAL-RELATED"/>
    <property type="match status" value="1"/>
</dbReference>
<dbReference type="Pfam" id="PF03331">
    <property type="entry name" value="LpxC"/>
    <property type="match status" value="1"/>
</dbReference>
<dbReference type="SUPFAM" id="SSF54211">
    <property type="entry name" value="Ribosomal protein S5 domain 2-like"/>
    <property type="match status" value="2"/>
</dbReference>
<sequence length="305" mass="33968">MIRQRTLKEIVKTTGVGLHSGRKVTLTLRPAAANTGIIYRRTDVNPPVDFPADPASVRDTMLCTALVNDQGVRISTVEHLNAALAGMGIDNAIIEVDAPEIPIMDGSASPFVYLLQQAGIQTLNAPKRFIRIKKPVRIEDGDKWAEFVPFNGFRMDFEIEFNHPAIDGDDQRLVFDFSSQGFVKEISRARTFGFMRDIEYLQSQNLCLGGSFDCAIVLDDYRILNEEGLRFDNEFVTHKVLDAIGDLYMAGHAIVGEFRAYKSGHGLNNQLLRAVLADQEAWEWATFEEEVGSPVAFAEPNMVLA</sequence>
<name>LPXC_VIBCM</name>
<keyword id="KW-0378">Hydrolase</keyword>
<keyword id="KW-0441">Lipid A biosynthesis</keyword>
<keyword id="KW-0444">Lipid biosynthesis</keyword>
<keyword id="KW-0443">Lipid metabolism</keyword>
<keyword id="KW-0479">Metal-binding</keyword>
<keyword id="KW-0862">Zinc</keyword>
<feature type="chain" id="PRO_1000134404" description="UDP-3-O-acyl-N-acetylglucosamine deacetylase">
    <location>
        <begin position="1"/>
        <end position="305"/>
    </location>
</feature>
<feature type="active site" description="Proton donor" evidence="1">
    <location>
        <position position="265"/>
    </location>
</feature>
<feature type="binding site" evidence="1">
    <location>
        <position position="79"/>
    </location>
    <ligand>
        <name>Zn(2+)</name>
        <dbReference type="ChEBI" id="CHEBI:29105"/>
    </ligand>
</feature>
<feature type="binding site" evidence="1">
    <location>
        <position position="238"/>
    </location>
    <ligand>
        <name>Zn(2+)</name>
        <dbReference type="ChEBI" id="CHEBI:29105"/>
    </ligand>
</feature>
<feature type="binding site" evidence="1">
    <location>
        <position position="242"/>
    </location>
    <ligand>
        <name>Zn(2+)</name>
        <dbReference type="ChEBI" id="CHEBI:29105"/>
    </ligand>
</feature>
<reference key="1">
    <citation type="journal article" date="2008" name="PLoS ONE">
        <title>A recalibrated molecular clock and independent origins for the cholera pandemic clones.</title>
        <authorList>
            <person name="Feng L."/>
            <person name="Reeves P.R."/>
            <person name="Lan R."/>
            <person name="Ren Y."/>
            <person name="Gao C."/>
            <person name="Zhou Z."/>
            <person name="Ren Y."/>
            <person name="Cheng J."/>
            <person name="Wang W."/>
            <person name="Wang J."/>
            <person name="Qian W."/>
            <person name="Li D."/>
            <person name="Wang L."/>
        </authorList>
    </citation>
    <scope>NUCLEOTIDE SEQUENCE [LARGE SCALE GENOMIC DNA]</scope>
    <source>
        <strain>M66-2</strain>
    </source>
</reference>